<gene>
    <name evidence="1" type="primary">ruvB</name>
    <name type="ordered locus">cauri_1417</name>
</gene>
<feature type="chain" id="PRO_1000195214" description="Holliday junction branch migration complex subunit RuvB">
    <location>
        <begin position="1"/>
        <end position="361"/>
    </location>
</feature>
<feature type="region of interest" description="Disordered" evidence="2">
    <location>
        <begin position="1"/>
        <end position="43"/>
    </location>
</feature>
<feature type="region of interest" description="Large ATPase domain (RuvB-L)" evidence="1">
    <location>
        <begin position="2"/>
        <end position="203"/>
    </location>
</feature>
<feature type="region of interest" description="Small ATPAse domain (RuvB-S)" evidence="1">
    <location>
        <begin position="204"/>
        <end position="274"/>
    </location>
</feature>
<feature type="region of interest" description="Head domain (RuvB-H)" evidence="1">
    <location>
        <begin position="277"/>
        <end position="361"/>
    </location>
</feature>
<feature type="compositionally biased region" description="Basic and acidic residues" evidence="2">
    <location>
        <begin position="1"/>
        <end position="13"/>
    </location>
</feature>
<feature type="compositionally biased region" description="Basic and acidic residues" evidence="2">
    <location>
        <begin position="33"/>
        <end position="43"/>
    </location>
</feature>
<feature type="binding site" evidence="1">
    <location>
        <position position="42"/>
    </location>
    <ligand>
        <name>ATP</name>
        <dbReference type="ChEBI" id="CHEBI:30616"/>
    </ligand>
</feature>
<feature type="binding site" evidence="1">
    <location>
        <position position="43"/>
    </location>
    <ligand>
        <name>ATP</name>
        <dbReference type="ChEBI" id="CHEBI:30616"/>
    </ligand>
</feature>
<feature type="binding site" evidence="1">
    <location>
        <position position="84"/>
    </location>
    <ligand>
        <name>ATP</name>
        <dbReference type="ChEBI" id="CHEBI:30616"/>
    </ligand>
</feature>
<feature type="binding site" evidence="1">
    <location>
        <position position="87"/>
    </location>
    <ligand>
        <name>ATP</name>
        <dbReference type="ChEBI" id="CHEBI:30616"/>
    </ligand>
</feature>
<feature type="binding site" evidence="1">
    <location>
        <position position="88"/>
    </location>
    <ligand>
        <name>ATP</name>
        <dbReference type="ChEBI" id="CHEBI:30616"/>
    </ligand>
</feature>
<feature type="binding site" evidence="1">
    <location>
        <position position="88"/>
    </location>
    <ligand>
        <name>Mg(2+)</name>
        <dbReference type="ChEBI" id="CHEBI:18420"/>
    </ligand>
</feature>
<feature type="binding site" evidence="1">
    <location>
        <position position="89"/>
    </location>
    <ligand>
        <name>ATP</name>
        <dbReference type="ChEBI" id="CHEBI:30616"/>
    </ligand>
</feature>
<feature type="binding site" evidence="1">
    <location>
        <begin position="150"/>
        <end position="152"/>
    </location>
    <ligand>
        <name>ATP</name>
        <dbReference type="ChEBI" id="CHEBI:30616"/>
    </ligand>
</feature>
<feature type="binding site" evidence="1">
    <location>
        <position position="193"/>
    </location>
    <ligand>
        <name>ATP</name>
        <dbReference type="ChEBI" id="CHEBI:30616"/>
    </ligand>
</feature>
<feature type="binding site" evidence="1">
    <location>
        <position position="203"/>
    </location>
    <ligand>
        <name>ATP</name>
        <dbReference type="ChEBI" id="CHEBI:30616"/>
    </ligand>
</feature>
<feature type="binding site" evidence="1">
    <location>
        <position position="240"/>
    </location>
    <ligand>
        <name>ATP</name>
        <dbReference type="ChEBI" id="CHEBI:30616"/>
    </ligand>
</feature>
<feature type="binding site" evidence="1">
    <location>
        <position position="332"/>
    </location>
    <ligand>
        <name>DNA</name>
        <dbReference type="ChEBI" id="CHEBI:16991"/>
    </ligand>
</feature>
<feature type="binding site" evidence="1">
    <location>
        <position position="337"/>
    </location>
    <ligand>
        <name>DNA</name>
        <dbReference type="ChEBI" id="CHEBI:16991"/>
    </ligand>
</feature>
<reference key="1">
    <citation type="journal article" date="2010" name="BMC Genomics">
        <title>Complete genome sequence and lifestyle of black-pigmented Corynebacterium aurimucosum ATCC 700975 (formerly C. nigricans CN-1) isolated from a vaginal swab of a woman with spontaneous abortion.</title>
        <authorList>
            <person name="Trost E."/>
            <person name="Gotker S."/>
            <person name="Schneider J."/>
            <person name="Schneiker-Bekel S."/>
            <person name="Szczepanowski R."/>
            <person name="Tilker A."/>
            <person name="Viehoever P."/>
            <person name="Arnold W."/>
            <person name="Bekel T."/>
            <person name="Blom J."/>
            <person name="Gartemann K.H."/>
            <person name="Linke B."/>
            <person name="Goesmann A."/>
            <person name="Puhler A."/>
            <person name="Shukla S.K."/>
            <person name="Tauch A."/>
        </authorList>
    </citation>
    <scope>NUCLEOTIDE SEQUENCE [LARGE SCALE GENOMIC DNA]</scope>
    <source>
        <strain>ATCC 700975 / DSM 44827 / CIP 107346 / CN-1</strain>
    </source>
</reference>
<protein>
    <recommendedName>
        <fullName evidence="1">Holliday junction branch migration complex subunit RuvB</fullName>
        <ecNumber evidence="1">3.6.4.-</ecNumber>
    </recommendedName>
</protein>
<evidence type="ECO:0000255" key="1">
    <source>
        <dbReference type="HAMAP-Rule" id="MF_00016"/>
    </source>
</evidence>
<evidence type="ECO:0000256" key="2">
    <source>
        <dbReference type="SAM" id="MobiDB-lite"/>
    </source>
</evidence>
<name>RUVB_CORA7</name>
<sequence length="361" mass="38941">MSDVERTEFKLPEGMDLSSPPQRNQDVDAAEQQGEHDIERSLRPKSLDEFIGQPKVREQLSLVLNGAKNRGVTPDHVLLSGPPGLGKTTMAMIIAQELGSSLRMTSGPALERAGDLAAMLSNLMEGDVLFIDEIHRIARPAEEMLYMAMEDFRIDVIVGKGPGATSIPLEIPPFTLVGATTRAGMLTGPLRDRFGFTAQMEYYDTEDLTRVISRAARILEVDIDQDAAVEIGSRSRGTPRIANRLLRRVRDYAEVNGDGHIDVAAAQAALRVFDVDERGLDRLDRAVLGALIKGHGGGPVGVNTLAIAVGEEPSTVEEVCEPYLVRAGMISRTGRGRVATAAAWQHLGLEAPEGAIGGTLF</sequence>
<organism>
    <name type="scientific">Corynebacterium aurimucosum (strain ATCC 700975 / DSM 44827 / CIP 107346 / CN-1)</name>
    <name type="common">Corynebacterium nigricans</name>
    <dbReference type="NCBI Taxonomy" id="548476"/>
    <lineage>
        <taxon>Bacteria</taxon>
        <taxon>Bacillati</taxon>
        <taxon>Actinomycetota</taxon>
        <taxon>Actinomycetes</taxon>
        <taxon>Mycobacteriales</taxon>
        <taxon>Corynebacteriaceae</taxon>
        <taxon>Corynebacterium</taxon>
    </lineage>
</organism>
<accession>C3PGQ6</accession>
<proteinExistence type="inferred from homology"/>
<keyword id="KW-0067">ATP-binding</keyword>
<keyword id="KW-0963">Cytoplasm</keyword>
<keyword id="KW-0227">DNA damage</keyword>
<keyword id="KW-0233">DNA recombination</keyword>
<keyword id="KW-0234">DNA repair</keyword>
<keyword id="KW-0238">DNA-binding</keyword>
<keyword id="KW-0378">Hydrolase</keyword>
<keyword id="KW-0547">Nucleotide-binding</keyword>
<keyword id="KW-1185">Reference proteome</keyword>
<dbReference type="EC" id="3.6.4.-" evidence="1"/>
<dbReference type="EMBL" id="CP001601">
    <property type="protein sequence ID" value="ACP33010.1"/>
    <property type="molecule type" value="Genomic_DNA"/>
</dbReference>
<dbReference type="RefSeq" id="WP_010190174.1">
    <property type="nucleotide sequence ID" value="NC_012590.1"/>
</dbReference>
<dbReference type="SMR" id="C3PGQ6"/>
<dbReference type="STRING" id="548476.cauri_1417"/>
<dbReference type="GeneID" id="31924043"/>
<dbReference type="KEGG" id="car:cauri_1417"/>
<dbReference type="eggNOG" id="COG2255">
    <property type="taxonomic scope" value="Bacteria"/>
</dbReference>
<dbReference type="HOGENOM" id="CLU_055599_1_0_11"/>
<dbReference type="OrthoDB" id="9804478at2"/>
<dbReference type="Proteomes" id="UP000002077">
    <property type="component" value="Chromosome"/>
</dbReference>
<dbReference type="GO" id="GO:0005737">
    <property type="term" value="C:cytoplasm"/>
    <property type="evidence" value="ECO:0007669"/>
    <property type="project" value="UniProtKB-SubCell"/>
</dbReference>
<dbReference type="GO" id="GO:0048476">
    <property type="term" value="C:Holliday junction resolvase complex"/>
    <property type="evidence" value="ECO:0007669"/>
    <property type="project" value="UniProtKB-UniRule"/>
</dbReference>
<dbReference type="GO" id="GO:0005524">
    <property type="term" value="F:ATP binding"/>
    <property type="evidence" value="ECO:0007669"/>
    <property type="project" value="UniProtKB-UniRule"/>
</dbReference>
<dbReference type="GO" id="GO:0016887">
    <property type="term" value="F:ATP hydrolysis activity"/>
    <property type="evidence" value="ECO:0007669"/>
    <property type="project" value="InterPro"/>
</dbReference>
<dbReference type="GO" id="GO:0000400">
    <property type="term" value="F:four-way junction DNA binding"/>
    <property type="evidence" value="ECO:0007669"/>
    <property type="project" value="UniProtKB-UniRule"/>
</dbReference>
<dbReference type="GO" id="GO:0009378">
    <property type="term" value="F:four-way junction helicase activity"/>
    <property type="evidence" value="ECO:0007669"/>
    <property type="project" value="InterPro"/>
</dbReference>
<dbReference type="GO" id="GO:0006310">
    <property type="term" value="P:DNA recombination"/>
    <property type="evidence" value="ECO:0007669"/>
    <property type="project" value="UniProtKB-UniRule"/>
</dbReference>
<dbReference type="GO" id="GO:0006281">
    <property type="term" value="P:DNA repair"/>
    <property type="evidence" value="ECO:0007669"/>
    <property type="project" value="UniProtKB-UniRule"/>
</dbReference>
<dbReference type="CDD" id="cd00009">
    <property type="entry name" value="AAA"/>
    <property type="match status" value="1"/>
</dbReference>
<dbReference type="FunFam" id="3.40.50.300:FF:000073">
    <property type="entry name" value="Holliday junction ATP-dependent DNA helicase RuvB"/>
    <property type="match status" value="1"/>
</dbReference>
<dbReference type="Gene3D" id="1.10.8.60">
    <property type="match status" value="1"/>
</dbReference>
<dbReference type="Gene3D" id="3.40.50.300">
    <property type="entry name" value="P-loop containing nucleotide triphosphate hydrolases"/>
    <property type="match status" value="1"/>
</dbReference>
<dbReference type="Gene3D" id="1.10.10.10">
    <property type="entry name" value="Winged helix-like DNA-binding domain superfamily/Winged helix DNA-binding domain"/>
    <property type="match status" value="1"/>
</dbReference>
<dbReference type="HAMAP" id="MF_00016">
    <property type="entry name" value="DNA_HJ_migration_RuvB"/>
    <property type="match status" value="1"/>
</dbReference>
<dbReference type="InterPro" id="IPR003593">
    <property type="entry name" value="AAA+_ATPase"/>
</dbReference>
<dbReference type="InterPro" id="IPR041445">
    <property type="entry name" value="AAA_lid_4"/>
</dbReference>
<dbReference type="InterPro" id="IPR004605">
    <property type="entry name" value="DNA_helicase_Holl-junc_RuvB"/>
</dbReference>
<dbReference type="InterPro" id="IPR027417">
    <property type="entry name" value="P-loop_NTPase"/>
</dbReference>
<dbReference type="InterPro" id="IPR008824">
    <property type="entry name" value="RuvB-like_N"/>
</dbReference>
<dbReference type="InterPro" id="IPR008823">
    <property type="entry name" value="RuvB_C"/>
</dbReference>
<dbReference type="InterPro" id="IPR036388">
    <property type="entry name" value="WH-like_DNA-bd_sf"/>
</dbReference>
<dbReference type="InterPro" id="IPR036390">
    <property type="entry name" value="WH_DNA-bd_sf"/>
</dbReference>
<dbReference type="NCBIfam" id="NF000868">
    <property type="entry name" value="PRK00080.1"/>
    <property type="match status" value="1"/>
</dbReference>
<dbReference type="NCBIfam" id="TIGR00635">
    <property type="entry name" value="ruvB"/>
    <property type="match status" value="1"/>
</dbReference>
<dbReference type="PANTHER" id="PTHR42848">
    <property type="match status" value="1"/>
</dbReference>
<dbReference type="PANTHER" id="PTHR42848:SF1">
    <property type="entry name" value="HOLLIDAY JUNCTION BRANCH MIGRATION COMPLEX SUBUNIT RUVB"/>
    <property type="match status" value="1"/>
</dbReference>
<dbReference type="Pfam" id="PF17864">
    <property type="entry name" value="AAA_lid_4"/>
    <property type="match status" value="1"/>
</dbReference>
<dbReference type="Pfam" id="PF05491">
    <property type="entry name" value="RuvB_C"/>
    <property type="match status" value="1"/>
</dbReference>
<dbReference type="Pfam" id="PF05496">
    <property type="entry name" value="RuvB_N"/>
    <property type="match status" value="1"/>
</dbReference>
<dbReference type="SMART" id="SM00382">
    <property type="entry name" value="AAA"/>
    <property type="match status" value="1"/>
</dbReference>
<dbReference type="SUPFAM" id="SSF52540">
    <property type="entry name" value="P-loop containing nucleoside triphosphate hydrolases"/>
    <property type="match status" value="1"/>
</dbReference>
<dbReference type="SUPFAM" id="SSF46785">
    <property type="entry name" value="Winged helix' DNA-binding domain"/>
    <property type="match status" value="1"/>
</dbReference>
<comment type="function">
    <text evidence="1">The RuvA-RuvB-RuvC complex processes Holliday junction (HJ) DNA during genetic recombination and DNA repair, while the RuvA-RuvB complex plays an important role in the rescue of blocked DNA replication forks via replication fork reversal (RFR). RuvA specifically binds to HJ cruciform DNA, conferring on it an open structure. The RuvB hexamer acts as an ATP-dependent pump, pulling dsDNA into and through the RuvAB complex. RuvB forms 2 homohexamers on either side of HJ DNA bound by 1 or 2 RuvA tetramers; 4 subunits per hexamer contact DNA at a time. Coordinated motions by a converter formed by DNA-disengaged RuvB subunits stimulates ATP hydrolysis and nucleotide exchange. Immobilization of the converter enables RuvB to convert the ATP-contained energy into a lever motion, pulling 2 nucleotides of DNA out of the RuvA tetramer per ATP hydrolyzed, thus driving DNA branch migration. The RuvB motors rotate together with the DNA substrate, which together with the progressing nucleotide cycle form the mechanistic basis for DNA recombination by continuous HJ branch migration. Branch migration allows RuvC to scan DNA until it finds its consensus sequence, where it cleaves and resolves cruciform DNA.</text>
</comment>
<comment type="catalytic activity">
    <reaction evidence="1">
        <text>ATP + H2O = ADP + phosphate + H(+)</text>
        <dbReference type="Rhea" id="RHEA:13065"/>
        <dbReference type="ChEBI" id="CHEBI:15377"/>
        <dbReference type="ChEBI" id="CHEBI:15378"/>
        <dbReference type="ChEBI" id="CHEBI:30616"/>
        <dbReference type="ChEBI" id="CHEBI:43474"/>
        <dbReference type="ChEBI" id="CHEBI:456216"/>
    </reaction>
</comment>
<comment type="subunit">
    <text evidence="1">Homohexamer. Forms an RuvA(8)-RuvB(12)-Holliday junction (HJ) complex. HJ DNA is sandwiched between 2 RuvA tetramers; dsDNA enters through RuvA and exits via RuvB. An RuvB hexamer assembles on each DNA strand where it exits the tetramer. Each RuvB hexamer is contacted by two RuvA subunits (via domain III) on 2 adjacent RuvB subunits; this complex drives branch migration. In the full resolvosome a probable DNA-RuvA(4)-RuvB(12)-RuvC(2) complex forms which resolves the HJ.</text>
</comment>
<comment type="subcellular location">
    <subcellularLocation>
        <location evidence="1">Cytoplasm</location>
    </subcellularLocation>
</comment>
<comment type="domain">
    <text evidence="1">Has 3 domains, the large (RuvB-L) and small ATPase (RuvB-S) domains and the C-terminal head (RuvB-H) domain. The head domain binds DNA, while the ATPase domains jointly bind ATP, ADP or are empty depending on the state of the subunit in the translocation cycle. During a single DNA translocation step the structure of each domain remains the same, but their relative positions change.</text>
</comment>
<comment type="similarity">
    <text evidence="1">Belongs to the RuvB family.</text>
</comment>